<proteinExistence type="evidence at transcript level"/>
<name>PPA4_ARATH</name>
<reference key="1">
    <citation type="journal article" date="2005" name="Plant Mol. Biol.">
        <title>Expression patterns of purple acid phosphatase genes in Arabidopsis organs and functional analysis of AtPAP23 predominantly transcribed in flower.</title>
        <authorList>
            <person name="Zhu H."/>
            <person name="Qian W."/>
            <person name="Lu X."/>
            <person name="Li D."/>
            <person name="Liu X."/>
            <person name="Liu K."/>
            <person name="Wang D."/>
        </authorList>
    </citation>
    <scope>NUCLEOTIDE SEQUENCE [MRNA]</scope>
    <scope>TISSUE SPECIFICITY</scope>
    <source>
        <strain>cv. Columbia</strain>
    </source>
</reference>
<reference key="2">
    <citation type="journal article" date="2000" name="Nature">
        <title>Sequence and analysis of chromosome 1 of the plant Arabidopsis thaliana.</title>
        <authorList>
            <person name="Theologis A."/>
            <person name="Ecker J.R."/>
            <person name="Palm C.J."/>
            <person name="Federspiel N.A."/>
            <person name="Kaul S."/>
            <person name="White O."/>
            <person name="Alonso J."/>
            <person name="Altafi H."/>
            <person name="Araujo R."/>
            <person name="Bowman C.L."/>
            <person name="Brooks S.Y."/>
            <person name="Buehler E."/>
            <person name="Chan A."/>
            <person name="Chao Q."/>
            <person name="Chen H."/>
            <person name="Cheuk R.F."/>
            <person name="Chin C.W."/>
            <person name="Chung M.K."/>
            <person name="Conn L."/>
            <person name="Conway A.B."/>
            <person name="Conway A.R."/>
            <person name="Creasy T.H."/>
            <person name="Dewar K."/>
            <person name="Dunn P."/>
            <person name="Etgu P."/>
            <person name="Feldblyum T.V."/>
            <person name="Feng J.-D."/>
            <person name="Fong B."/>
            <person name="Fujii C.Y."/>
            <person name="Gill J.E."/>
            <person name="Goldsmith A.D."/>
            <person name="Haas B."/>
            <person name="Hansen N.F."/>
            <person name="Hughes B."/>
            <person name="Huizar L."/>
            <person name="Hunter J.L."/>
            <person name="Jenkins J."/>
            <person name="Johnson-Hopson C."/>
            <person name="Khan S."/>
            <person name="Khaykin E."/>
            <person name="Kim C.J."/>
            <person name="Koo H.L."/>
            <person name="Kremenetskaia I."/>
            <person name="Kurtz D.B."/>
            <person name="Kwan A."/>
            <person name="Lam B."/>
            <person name="Langin-Hooper S."/>
            <person name="Lee A."/>
            <person name="Lee J.M."/>
            <person name="Lenz C.A."/>
            <person name="Li J.H."/>
            <person name="Li Y.-P."/>
            <person name="Lin X."/>
            <person name="Liu S.X."/>
            <person name="Liu Z.A."/>
            <person name="Luros J.S."/>
            <person name="Maiti R."/>
            <person name="Marziali A."/>
            <person name="Militscher J."/>
            <person name="Miranda M."/>
            <person name="Nguyen M."/>
            <person name="Nierman W.C."/>
            <person name="Osborne B.I."/>
            <person name="Pai G."/>
            <person name="Peterson J."/>
            <person name="Pham P.K."/>
            <person name="Rizzo M."/>
            <person name="Rooney T."/>
            <person name="Rowley D."/>
            <person name="Sakano H."/>
            <person name="Salzberg S.L."/>
            <person name="Schwartz J.R."/>
            <person name="Shinn P."/>
            <person name="Southwick A.M."/>
            <person name="Sun H."/>
            <person name="Tallon L.J."/>
            <person name="Tambunga G."/>
            <person name="Toriumi M.J."/>
            <person name="Town C.D."/>
            <person name="Utterback T."/>
            <person name="Van Aken S."/>
            <person name="Vaysberg M."/>
            <person name="Vysotskaia V.S."/>
            <person name="Walker M."/>
            <person name="Wu D."/>
            <person name="Yu G."/>
            <person name="Fraser C.M."/>
            <person name="Venter J.C."/>
            <person name="Davis R.W."/>
        </authorList>
    </citation>
    <scope>NUCLEOTIDE SEQUENCE [LARGE SCALE GENOMIC DNA]</scope>
    <source>
        <strain>cv. Columbia</strain>
    </source>
</reference>
<reference key="3">
    <citation type="journal article" date="2017" name="Plant J.">
        <title>Araport11: a complete reannotation of the Arabidopsis thaliana reference genome.</title>
        <authorList>
            <person name="Cheng C.Y."/>
            <person name="Krishnakumar V."/>
            <person name="Chan A.P."/>
            <person name="Thibaud-Nissen F."/>
            <person name="Schobel S."/>
            <person name="Town C.D."/>
        </authorList>
    </citation>
    <scope>GENOME REANNOTATION</scope>
    <source>
        <strain>cv. Columbia</strain>
    </source>
</reference>
<reference key="4">
    <citation type="journal article" date="2003" name="Science">
        <title>Empirical analysis of transcriptional activity in the Arabidopsis genome.</title>
        <authorList>
            <person name="Yamada K."/>
            <person name="Lim J."/>
            <person name="Dale J.M."/>
            <person name="Chen H."/>
            <person name="Shinn P."/>
            <person name="Palm C.J."/>
            <person name="Southwick A.M."/>
            <person name="Wu H.C."/>
            <person name="Kim C.J."/>
            <person name="Nguyen M."/>
            <person name="Pham P.K."/>
            <person name="Cheuk R.F."/>
            <person name="Karlin-Newmann G."/>
            <person name="Liu S.X."/>
            <person name="Lam B."/>
            <person name="Sakano H."/>
            <person name="Wu T."/>
            <person name="Yu G."/>
            <person name="Miranda M."/>
            <person name="Quach H.L."/>
            <person name="Tripp M."/>
            <person name="Chang C.H."/>
            <person name="Lee J.M."/>
            <person name="Toriumi M.J."/>
            <person name="Chan M.M."/>
            <person name="Tang C.C."/>
            <person name="Onodera C.S."/>
            <person name="Deng J.M."/>
            <person name="Akiyama K."/>
            <person name="Ansari Y."/>
            <person name="Arakawa T."/>
            <person name="Banh J."/>
            <person name="Banno F."/>
            <person name="Bowser L."/>
            <person name="Brooks S.Y."/>
            <person name="Carninci P."/>
            <person name="Chao Q."/>
            <person name="Choy N."/>
            <person name="Enju A."/>
            <person name="Goldsmith A.D."/>
            <person name="Gurjal M."/>
            <person name="Hansen N.F."/>
            <person name="Hayashizaki Y."/>
            <person name="Johnson-Hopson C."/>
            <person name="Hsuan V.W."/>
            <person name="Iida K."/>
            <person name="Karnes M."/>
            <person name="Khan S."/>
            <person name="Koesema E."/>
            <person name="Ishida J."/>
            <person name="Jiang P.X."/>
            <person name="Jones T."/>
            <person name="Kawai J."/>
            <person name="Kamiya A."/>
            <person name="Meyers C."/>
            <person name="Nakajima M."/>
            <person name="Narusaka M."/>
            <person name="Seki M."/>
            <person name="Sakurai T."/>
            <person name="Satou M."/>
            <person name="Tamse R."/>
            <person name="Vaysberg M."/>
            <person name="Wallender E.K."/>
            <person name="Wong C."/>
            <person name="Yamamura Y."/>
            <person name="Yuan S."/>
            <person name="Shinozaki K."/>
            <person name="Davis R.W."/>
            <person name="Theologis A."/>
            <person name="Ecker J.R."/>
        </authorList>
    </citation>
    <scope>NUCLEOTIDE SEQUENCE [LARGE SCALE MRNA]</scope>
    <source>
        <strain>cv. Columbia</strain>
    </source>
</reference>
<reference key="5">
    <citation type="journal article" date="2002" name="J. Biol. Chem.">
        <title>Purple acid phosphatases of Arabidopsis thaliana. Comparative analysis and differential regulation by phosphate deprivation.</title>
        <authorList>
            <person name="Li D."/>
            <person name="Zhu H."/>
            <person name="Liu K."/>
            <person name="Liu X."/>
            <person name="Leggewie G."/>
            <person name="Udvardi M."/>
            <person name="Wang D."/>
        </authorList>
    </citation>
    <scope>GENE FAMILY</scope>
    <scope>NOMENCLATURE</scope>
</reference>
<comment type="catalytic activity">
    <reaction>
        <text>a phosphate monoester + H2O = an alcohol + phosphate</text>
        <dbReference type="Rhea" id="RHEA:15017"/>
        <dbReference type="ChEBI" id="CHEBI:15377"/>
        <dbReference type="ChEBI" id="CHEBI:30879"/>
        <dbReference type="ChEBI" id="CHEBI:43474"/>
        <dbReference type="ChEBI" id="CHEBI:67140"/>
        <dbReference type="EC" id="3.1.3.2"/>
    </reaction>
</comment>
<comment type="cofactor">
    <cofactor evidence="1">
        <name>Fe cation</name>
        <dbReference type="ChEBI" id="CHEBI:24875"/>
    </cofactor>
    <text evidence="1">Binds 1 Fe cation per subunit.</text>
</comment>
<comment type="cofactor">
    <cofactor evidence="1">
        <name>Zn(2+)</name>
        <dbReference type="ChEBI" id="CHEBI:29105"/>
    </cofactor>
    <text evidence="1">Binds 1 zinc ion per subunit.</text>
</comment>
<comment type="subunit">
    <text evidence="1">Homodimer.</text>
</comment>
<comment type="subcellular location">
    <subcellularLocation>
        <location evidence="1">Secreted</location>
    </subcellularLocation>
</comment>
<comment type="tissue specificity">
    <text evidence="3">Expressed in roots, stems, leaves, flowers and siliques.</text>
</comment>
<comment type="similarity">
    <text evidence="4">Belongs to the metallophosphoesterase superfamily. Purple acid phosphatase family.</text>
</comment>
<comment type="sequence caution" evidence="4">
    <conflict type="erroneous gene model prediction">
        <sequence resource="EMBL-CDS" id="AAG28815"/>
    </conflict>
</comment>
<organism>
    <name type="scientific">Arabidopsis thaliana</name>
    <name type="common">Mouse-ear cress</name>
    <dbReference type="NCBI Taxonomy" id="3702"/>
    <lineage>
        <taxon>Eukaryota</taxon>
        <taxon>Viridiplantae</taxon>
        <taxon>Streptophyta</taxon>
        <taxon>Embryophyta</taxon>
        <taxon>Tracheophyta</taxon>
        <taxon>Spermatophyta</taxon>
        <taxon>Magnoliopsida</taxon>
        <taxon>eudicotyledons</taxon>
        <taxon>Gunneridae</taxon>
        <taxon>Pentapetalae</taxon>
        <taxon>rosids</taxon>
        <taxon>malvids</taxon>
        <taxon>Brassicales</taxon>
        <taxon>Brassicaceae</taxon>
        <taxon>Camelineae</taxon>
        <taxon>Arabidopsis</taxon>
    </lineage>
</organism>
<dbReference type="EC" id="3.1.3.2"/>
<dbReference type="EMBL" id="AY842021">
    <property type="protein sequence ID" value="AAW29946.1"/>
    <property type="molecule type" value="mRNA"/>
</dbReference>
<dbReference type="EMBL" id="AC079374">
    <property type="protein sequence ID" value="AAG28815.1"/>
    <property type="status" value="ALT_SEQ"/>
    <property type="molecule type" value="Genomic_DNA"/>
</dbReference>
<dbReference type="EMBL" id="CP002684">
    <property type="protein sequence ID" value="AEE30591.1"/>
    <property type="molecule type" value="Genomic_DNA"/>
</dbReference>
<dbReference type="EMBL" id="AY069908">
    <property type="protein sequence ID" value="AAL47459.1"/>
    <property type="molecule type" value="mRNA"/>
</dbReference>
<dbReference type="EMBL" id="AY141997">
    <property type="protein sequence ID" value="AAM98261.1"/>
    <property type="molecule type" value="mRNA"/>
</dbReference>
<dbReference type="PIR" id="H86381">
    <property type="entry name" value="H86381"/>
</dbReference>
<dbReference type="RefSeq" id="NP_173894.2">
    <property type="nucleotide sequence ID" value="NM_102332.4"/>
</dbReference>
<dbReference type="SMR" id="Q8VYU7"/>
<dbReference type="FunCoup" id="Q8VYU7">
    <property type="interactions" value="332"/>
</dbReference>
<dbReference type="STRING" id="3702.Q8VYU7"/>
<dbReference type="GlyCosmos" id="Q8VYU7">
    <property type="glycosylation" value="2 sites, No reported glycans"/>
</dbReference>
<dbReference type="GlyGen" id="Q8VYU7">
    <property type="glycosylation" value="2 sites"/>
</dbReference>
<dbReference type="PaxDb" id="3702-AT1G25230.1"/>
<dbReference type="ProteomicsDB" id="250552"/>
<dbReference type="EnsemblPlants" id="AT1G25230.1">
    <property type="protein sequence ID" value="AT1G25230.1"/>
    <property type="gene ID" value="AT1G25230"/>
</dbReference>
<dbReference type="GeneID" id="839105"/>
<dbReference type="Gramene" id="AT1G25230.1">
    <property type="protein sequence ID" value="AT1G25230.1"/>
    <property type="gene ID" value="AT1G25230"/>
</dbReference>
<dbReference type="KEGG" id="ath:AT1G25230"/>
<dbReference type="Araport" id="AT1G25230"/>
<dbReference type="TAIR" id="AT1G25230"/>
<dbReference type="eggNOG" id="KOG2679">
    <property type="taxonomic scope" value="Eukaryota"/>
</dbReference>
<dbReference type="HOGENOM" id="CLU_043332_3_0_1"/>
<dbReference type="InParanoid" id="Q8VYU7"/>
<dbReference type="PhylomeDB" id="Q8VYU7"/>
<dbReference type="PRO" id="PR:Q8VYU7"/>
<dbReference type="Proteomes" id="UP000006548">
    <property type="component" value="Chromosome 1"/>
</dbReference>
<dbReference type="ExpressionAtlas" id="Q8VYU7">
    <property type="expression patterns" value="baseline and differential"/>
</dbReference>
<dbReference type="GO" id="GO:0005576">
    <property type="term" value="C:extracellular region"/>
    <property type="evidence" value="ECO:0007669"/>
    <property type="project" value="UniProtKB-SubCell"/>
</dbReference>
<dbReference type="GO" id="GO:0003993">
    <property type="term" value="F:acid phosphatase activity"/>
    <property type="evidence" value="ECO:0007669"/>
    <property type="project" value="UniProtKB-EC"/>
</dbReference>
<dbReference type="GO" id="GO:0046872">
    <property type="term" value="F:metal ion binding"/>
    <property type="evidence" value="ECO:0007669"/>
    <property type="project" value="UniProtKB-KW"/>
</dbReference>
<dbReference type="CDD" id="cd07378">
    <property type="entry name" value="MPP_ACP5"/>
    <property type="match status" value="1"/>
</dbReference>
<dbReference type="FunFam" id="3.60.21.10:FF:000027">
    <property type="entry name" value="Purple acid phosphatase"/>
    <property type="match status" value="1"/>
</dbReference>
<dbReference type="Gene3D" id="3.60.21.10">
    <property type="match status" value="1"/>
</dbReference>
<dbReference type="InterPro" id="IPR024927">
    <property type="entry name" value="Acid_PPase"/>
</dbReference>
<dbReference type="InterPro" id="IPR004843">
    <property type="entry name" value="Calcineurin-like_PHP_ApaH"/>
</dbReference>
<dbReference type="InterPro" id="IPR029052">
    <property type="entry name" value="Metallo-depent_PP-like"/>
</dbReference>
<dbReference type="InterPro" id="IPR051558">
    <property type="entry name" value="Metallophosphoesterase_PAP"/>
</dbReference>
<dbReference type="PANTHER" id="PTHR10161:SF34">
    <property type="entry name" value="PURPLE ACID PHOSPHATASE 4"/>
    <property type="match status" value="1"/>
</dbReference>
<dbReference type="PANTHER" id="PTHR10161">
    <property type="entry name" value="TARTRATE-RESISTANT ACID PHOSPHATASE TYPE 5"/>
    <property type="match status" value="1"/>
</dbReference>
<dbReference type="Pfam" id="PF00149">
    <property type="entry name" value="Metallophos"/>
    <property type="match status" value="1"/>
</dbReference>
<dbReference type="PIRSF" id="PIRSF000898">
    <property type="entry name" value="Acid_Ptase_5"/>
    <property type="match status" value="1"/>
</dbReference>
<dbReference type="SUPFAM" id="SSF56300">
    <property type="entry name" value="Metallo-dependent phosphatases"/>
    <property type="match status" value="1"/>
</dbReference>
<keyword id="KW-0325">Glycoprotein</keyword>
<keyword id="KW-0378">Hydrolase</keyword>
<keyword id="KW-0408">Iron</keyword>
<keyword id="KW-0479">Metal-binding</keyword>
<keyword id="KW-1185">Reference proteome</keyword>
<keyword id="KW-0964">Secreted</keyword>
<keyword id="KW-0732">Signal</keyword>
<keyword id="KW-0862">Zinc</keyword>
<protein>
    <recommendedName>
        <fullName>Purple acid phosphatase 4</fullName>
        <ecNumber>3.1.3.2</ecNumber>
    </recommendedName>
</protein>
<sequence length="339" mass="38241">MSSKFDIGSLSIVMTLLICFLLLSLAPKLEAELATVQHAPNPDGSISFLVIGDWGRHGLYNQSQVALQMGRIGEEMDINFVVSTGDNIYDNGMKSIDDPAFQLSFSNIYTSPSLQKPWYLVLGNHDYRGDVEAQLSPILRSMDSRWICMRSFIVDAEIAELFFVDTTPFVDAYFLSPQDQTYDWSGVSPRKSYLQTILTELEMGLRESSAKWKIVVGHHAIKSASIHGNTKELESLLLPILEANKVDLYMNGHDHCLQHISTSQSPIQFLTSGGGSKAWRGYYNWTTPEDMKFFYDGQGFMSVKITRSELSVVFYDVSGNSLHKWDTSKMLDSDFYFPL</sequence>
<evidence type="ECO:0000250" key="1"/>
<evidence type="ECO:0000255" key="2"/>
<evidence type="ECO:0000269" key="3">
    <source>
    </source>
</evidence>
<evidence type="ECO:0000305" key="4"/>
<gene>
    <name type="primary">PAP4</name>
    <name type="ordered locus">At1g25230</name>
    <name type="ORF">F4F7.38</name>
</gene>
<feature type="signal peptide" evidence="2">
    <location>
        <begin position="1"/>
        <end position="31"/>
    </location>
</feature>
<feature type="chain" id="PRO_0000372809" description="Purple acid phosphatase 4">
    <location>
        <begin position="32"/>
        <end position="339"/>
    </location>
</feature>
<feature type="active site" description="Proton donor" evidence="1">
    <location>
        <position position="227"/>
    </location>
</feature>
<feature type="binding site" evidence="1">
    <location>
        <position position="53"/>
    </location>
    <ligand>
        <name>Fe cation</name>
        <dbReference type="ChEBI" id="CHEBI:24875"/>
    </ligand>
</feature>
<feature type="binding site" evidence="1">
    <location>
        <position position="86"/>
    </location>
    <ligand>
        <name>Fe cation</name>
        <dbReference type="ChEBI" id="CHEBI:24875"/>
    </ligand>
</feature>
<feature type="binding site" evidence="1">
    <location>
        <position position="86"/>
    </location>
    <ligand>
        <name>Zn(2+)</name>
        <dbReference type="ChEBI" id="CHEBI:29105"/>
    </ligand>
</feature>
<feature type="binding site" evidence="1">
    <location>
        <position position="89"/>
    </location>
    <ligand>
        <name>Fe cation</name>
        <dbReference type="ChEBI" id="CHEBI:24875"/>
    </ligand>
</feature>
<feature type="binding site" evidence="1">
    <location>
        <position position="124"/>
    </location>
    <ligand>
        <name>Zn(2+)</name>
        <dbReference type="ChEBI" id="CHEBI:29105"/>
    </ligand>
</feature>
<feature type="binding site" evidence="1">
    <location>
        <position position="218"/>
    </location>
    <ligand>
        <name>Zn(2+)</name>
        <dbReference type="ChEBI" id="CHEBI:29105"/>
    </ligand>
</feature>
<feature type="binding site" evidence="1">
    <location>
        <begin position="253"/>
        <end position="255"/>
    </location>
    <ligand>
        <name>substrate</name>
    </ligand>
</feature>
<feature type="binding site" evidence="1">
    <location>
        <position position="253"/>
    </location>
    <ligand>
        <name>Zn(2+)</name>
        <dbReference type="ChEBI" id="CHEBI:29105"/>
    </ligand>
</feature>
<feature type="binding site" evidence="1">
    <location>
        <position position="255"/>
    </location>
    <ligand>
        <name>Fe cation</name>
        <dbReference type="ChEBI" id="CHEBI:24875"/>
    </ligand>
</feature>
<feature type="glycosylation site" description="N-linked (GlcNAc...) asparagine" evidence="2">
    <location>
        <position position="61"/>
    </location>
</feature>
<feature type="glycosylation site" description="N-linked (GlcNAc...) asparagine" evidence="2">
    <location>
        <position position="284"/>
    </location>
</feature>
<accession>Q8VYU7</accession>
<accession>Q9FRH2</accession>